<feature type="chain" id="PRO_0000126703" description="Phenylalanine--tRNA ligase alpha subunit">
    <location>
        <begin position="1"/>
        <end position="327"/>
    </location>
</feature>
<feature type="binding site" evidence="1">
    <location>
        <position position="252"/>
    </location>
    <ligand>
        <name>Mg(2+)</name>
        <dbReference type="ChEBI" id="CHEBI:18420"/>
        <note>shared with beta subunit</note>
    </ligand>
</feature>
<gene>
    <name evidence="1" type="primary">pheS</name>
    <name type="ordered locus">Z2743</name>
    <name type="ordered locus">ECs2421</name>
</gene>
<protein>
    <recommendedName>
        <fullName evidence="1">Phenylalanine--tRNA ligase alpha subunit</fullName>
        <ecNumber evidence="1">6.1.1.20</ecNumber>
    </recommendedName>
    <alternativeName>
        <fullName evidence="1">Phenylalanyl-tRNA synthetase alpha subunit</fullName>
        <shortName evidence="1">PheRS</shortName>
    </alternativeName>
</protein>
<name>SYFA_ECO57</name>
<comment type="catalytic activity">
    <reaction evidence="1">
        <text>tRNA(Phe) + L-phenylalanine + ATP = L-phenylalanyl-tRNA(Phe) + AMP + diphosphate + H(+)</text>
        <dbReference type="Rhea" id="RHEA:19413"/>
        <dbReference type="Rhea" id="RHEA-COMP:9668"/>
        <dbReference type="Rhea" id="RHEA-COMP:9699"/>
        <dbReference type="ChEBI" id="CHEBI:15378"/>
        <dbReference type="ChEBI" id="CHEBI:30616"/>
        <dbReference type="ChEBI" id="CHEBI:33019"/>
        <dbReference type="ChEBI" id="CHEBI:58095"/>
        <dbReference type="ChEBI" id="CHEBI:78442"/>
        <dbReference type="ChEBI" id="CHEBI:78531"/>
        <dbReference type="ChEBI" id="CHEBI:456215"/>
        <dbReference type="EC" id="6.1.1.20"/>
    </reaction>
</comment>
<comment type="cofactor">
    <cofactor evidence="1">
        <name>Mg(2+)</name>
        <dbReference type="ChEBI" id="CHEBI:18420"/>
    </cofactor>
    <text evidence="1">Binds 2 magnesium ions per tetramer.</text>
</comment>
<comment type="subunit">
    <text evidence="1">Tetramer of two alpha and two beta subunits.</text>
</comment>
<comment type="subcellular location">
    <subcellularLocation>
        <location evidence="1">Cytoplasm</location>
    </subcellularLocation>
</comment>
<comment type="similarity">
    <text evidence="1">Belongs to the class-II aminoacyl-tRNA synthetase family. Phe-tRNA synthetase alpha subunit type 1 subfamily.</text>
</comment>
<accession>P67037</accession>
<accession>Q8XE31</accession>
<proteinExistence type="inferred from homology"/>
<reference key="1">
    <citation type="journal article" date="2001" name="Nature">
        <title>Genome sequence of enterohaemorrhagic Escherichia coli O157:H7.</title>
        <authorList>
            <person name="Perna N.T."/>
            <person name="Plunkett G. III"/>
            <person name="Burland V."/>
            <person name="Mau B."/>
            <person name="Glasner J.D."/>
            <person name="Rose D.J."/>
            <person name="Mayhew G.F."/>
            <person name="Evans P.S."/>
            <person name="Gregor J."/>
            <person name="Kirkpatrick H.A."/>
            <person name="Posfai G."/>
            <person name="Hackett J."/>
            <person name="Klink S."/>
            <person name="Boutin A."/>
            <person name="Shao Y."/>
            <person name="Miller L."/>
            <person name="Grotbeck E.J."/>
            <person name="Davis N.W."/>
            <person name="Lim A."/>
            <person name="Dimalanta E.T."/>
            <person name="Potamousis K."/>
            <person name="Apodaca J."/>
            <person name="Anantharaman T.S."/>
            <person name="Lin J."/>
            <person name="Yen G."/>
            <person name="Schwartz D.C."/>
            <person name="Welch R.A."/>
            <person name="Blattner F.R."/>
        </authorList>
    </citation>
    <scope>NUCLEOTIDE SEQUENCE [LARGE SCALE GENOMIC DNA]</scope>
    <source>
        <strain>O157:H7 / EDL933 / ATCC 700927 / EHEC</strain>
    </source>
</reference>
<reference key="2">
    <citation type="journal article" date="2001" name="DNA Res.">
        <title>Complete genome sequence of enterohemorrhagic Escherichia coli O157:H7 and genomic comparison with a laboratory strain K-12.</title>
        <authorList>
            <person name="Hayashi T."/>
            <person name="Makino K."/>
            <person name="Ohnishi M."/>
            <person name="Kurokawa K."/>
            <person name="Ishii K."/>
            <person name="Yokoyama K."/>
            <person name="Han C.-G."/>
            <person name="Ohtsubo E."/>
            <person name="Nakayama K."/>
            <person name="Murata T."/>
            <person name="Tanaka M."/>
            <person name="Tobe T."/>
            <person name="Iida T."/>
            <person name="Takami H."/>
            <person name="Honda T."/>
            <person name="Sasakawa C."/>
            <person name="Ogasawara N."/>
            <person name="Yasunaga T."/>
            <person name="Kuhara S."/>
            <person name="Shiba T."/>
            <person name="Hattori M."/>
            <person name="Shinagawa H."/>
        </authorList>
    </citation>
    <scope>NUCLEOTIDE SEQUENCE [LARGE SCALE GENOMIC DNA]</scope>
    <source>
        <strain>O157:H7 / Sakai / RIMD 0509952 / EHEC</strain>
    </source>
</reference>
<sequence length="327" mass="36802">MSHLAELVASAKAAISQASDVAALDNVRVEYLGKKGHLTLQMTTLRELPPEERPAAGAVINEAKEQVQQALNARKAELESAALNARLAAETIDVSLPGRRIENGGLHPVTRTIDRIESFFGELGFTVATGPEIEDDYHNFDALNIPGHHPARADHDTFWFDATRLLRTQTSGVQIRTMKAQQPPIRIIAPGRVYRNDYDQTHTPMFHQMEGLIVDTNISFTNLKGTLHDFLRNFFEEDLQIRFRPSYFPFTEPSAEVDVMGKNGKWLEVLGCGMVHPNVLRNVGIDPEVYSGFAFGMGMERLTMLRYGVTDLRSFFENDLRFLKQFK</sequence>
<organism>
    <name type="scientific">Escherichia coli O157:H7</name>
    <dbReference type="NCBI Taxonomy" id="83334"/>
    <lineage>
        <taxon>Bacteria</taxon>
        <taxon>Pseudomonadati</taxon>
        <taxon>Pseudomonadota</taxon>
        <taxon>Gammaproteobacteria</taxon>
        <taxon>Enterobacterales</taxon>
        <taxon>Enterobacteriaceae</taxon>
        <taxon>Escherichia</taxon>
    </lineage>
</organism>
<evidence type="ECO:0000255" key="1">
    <source>
        <dbReference type="HAMAP-Rule" id="MF_00281"/>
    </source>
</evidence>
<dbReference type="EC" id="6.1.1.20" evidence="1"/>
<dbReference type="EMBL" id="AE005174">
    <property type="protein sequence ID" value="AAG56701.1"/>
    <property type="molecule type" value="Genomic_DNA"/>
</dbReference>
<dbReference type="EMBL" id="BA000007">
    <property type="protein sequence ID" value="BAB35844.1"/>
    <property type="molecule type" value="Genomic_DNA"/>
</dbReference>
<dbReference type="PIR" id="A85780">
    <property type="entry name" value="A85780"/>
</dbReference>
<dbReference type="PIR" id="E90931">
    <property type="entry name" value="E90931"/>
</dbReference>
<dbReference type="RefSeq" id="NP_310448.1">
    <property type="nucleotide sequence ID" value="NC_002695.1"/>
</dbReference>
<dbReference type="RefSeq" id="WP_000018588.1">
    <property type="nucleotide sequence ID" value="NZ_VOAI01000007.1"/>
</dbReference>
<dbReference type="SMR" id="P67037"/>
<dbReference type="STRING" id="155864.Z2743"/>
<dbReference type="GeneID" id="86946239"/>
<dbReference type="GeneID" id="916567"/>
<dbReference type="KEGG" id="ece:Z2743"/>
<dbReference type="KEGG" id="ecs:ECs_2421"/>
<dbReference type="PATRIC" id="fig|386585.9.peg.2535"/>
<dbReference type="eggNOG" id="COG0016">
    <property type="taxonomic scope" value="Bacteria"/>
</dbReference>
<dbReference type="HOGENOM" id="CLU_025086_0_1_6"/>
<dbReference type="OMA" id="EIMGCGM"/>
<dbReference type="Proteomes" id="UP000000558">
    <property type="component" value="Chromosome"/>
</dbReference>
<dbReference type="Proteomes" id="UP000002519">
    <property type="component" value="Chromosome"/>
</dbReference>
<dbReference type="GO" id="GO:0005737">
    <property type="term" value="C:cytoplasm"/>
    <property type="evidence" value="ECO:0007669"/>
    <property type="project" value="UniProtKB-SubCell"/>
</dbReference>
<dbReference type="GO" id="GO:0005524">
    <property type="term" value="F:ATP binding"/>
    <property type="evidence" value="ECO:0007669"/>
    <property type="project" value="UniProtKB-UniRule"/>
</dbReference>
<dbReference type="GO" id="GO:0000287">
    <property type="term" value="F:magnesium ion binding"/>
    <property type="evidence" value="ECO:0007669"/>
    <property type="project" value="UniProtKB-UniRule"/>
</dbReference>
<dbReference type="GO" id="GO:0004826">
    <property type="term" value="F:phenylalanine-tRNA ligase activity"/>
    <property type="evidence" value="ECO:0007669"/>
    <property type="project" value="UniProtKB-UniRule"/>
</dbReference>
<dbReference type="GO" id="GO:0000049">
    <property type="term" value="F:tRNA binding"/>
    <property type="evidence" value="ECO:0007669"/>
    <property type="project" value="InterPro"/>
</dbReference>
<dbReference type="GO" id="GO:0006432">
    <property type="term" value="P:phenylalanyl-tRNA aminoacylation"/>
    <property type="evidence" value="ECO:0007669"/>
    <property type="project" value="UniProtKB-UniRule"/>
</dbReference>
<dbReference type="CDD" id="cd00496">
    <property type="entry name" value="PheRS_alpha_core"/>
    <property type="match status" value="1"/>
</dbReference>
<dbReference type="FunFam" id="3.30.930.10:FF:000003">
    <property type="entry name" value="Phenylalanine--tRNA ligase alpha subunit"/>
    <property type="match status" value="1"/>
</dbReference>
<dbReference type="Gene3D" id="3.30.930.10">
    <property type="entry name" value="Bira Bifunctional Protein, Domain 2"/>
    <property type="match status" value="1"/>
</dbReference>
<dbReference type="HAMAP" id="MF_00281">
    <property type="entry name" value="Phe_tRNA_synth_alpha1"/>
    <property type="match status" value="1"/>
</dbReference>
<dbReference type="InterPro" id="IPR006195">
    <property type="entry name" value="aa-tRNA-synth_II"/>
</dbReference>
<dbReference type="InterPro" id="IPR045864">
    <property type="entry name" value="aa-tRNA-synth_II/BPL/LPL"/>
</dbReference>
<dbReference type="InterPro" id="IPR004529">
    <property type="entry name" value="Phe-tRNA-synth_IIc_asu"/>
</dbReference>
<dbReference type="InterPro" id="IPR004188">
    <property type="entry name" value="Phe-tRNA_ligase_II_N"/>
</dbReference>
<dbReference type="InterPro" id="IPR022911">
    <property type="entry name" value="Phe_tRNA_ligase_alpha1_bac"/>
</dbReference>
<dbReference type="InterPro" id="IPR002319">
    <property type="entry name" value="Phenylalanyl-tRNA_Synthase"/>
</dbReference>
<dbReference type="InterPro" id="IPR010978">
    <property type="entry name" value="tRNA-bd_arm"/>
</dbReference>
<dbReference type="NCBIfam" id="TIGR00468">
    <property type="entry name" value="pheS"/>
    <property type="match status" value="1"/>
</dbReference>
<dbReference type="PANTHER" id="PTHR11538:SF41">
    <property type="entry name" value="PHENYLALANINE--TRNA LIGASE, MITOCHONDRIAL"/>
    <property type="match status" value="1"/>
</dbReference>
<dbReference type="PANTHER" id="PTHR11538">
    <property type="entry name" value="PHENYLALANYL-TRNA SYNTHETASE"/>
    <property type="match status" value="1"/>
</dbReference>
<dbReference type="Pfam" id="PF02912">
    <property type="entry name" value="Phe_tRNA-synt_N"/>
    <property type="match status" value="1"/>
</dbReference>
<dbReference type="Pfam" id="PF01409">
    <property type="entry name" value="tRNA-synt_2d"/>
    <property type="match status" value="1"/>
</dbReference>
<dbReference type="SUPFAM" id="SSF55681">
    <property type="entry name" value="Class II aaRS and biotin synthetases"/>
    <property type="match status" value="1"/>
</dbReference>
<dbReference type="SUPFAM" id="SSF46589">
    <property type="entry name" value="tRNA-binding arm"/>
    <property type="match status" value="1"/>
</dbReference>
<dbReference type="PROSITE" id="PS50862">
    <property type="entry name" value="AA_TRNA_LIGASE_II"/>
    <property type="match status" value="1"/>
</dbReference>
<keyword id="KW-0030">Aminoacyl-tRNA synthetase</keyword>
<keyword id="KW-0067">ATP-binding</keyword>
<keyword id="KW-0963">Cytoplasm</keyword>
<keyword id="KW-0436">Ligase</keyword>
<keyword id="KW-0460">Magnesium</keyword>
<keyword id="KW-0479">Metal-binding</keyword>
<keyword id="KW-0547">Nucleotide-binding</keyword>
<keyword id="KW-0648">Protein biosynthesis</keyword>
<keyword id="KW-1185">Reference proteome</keyword>